<evidence type="ECO:0000250" key="1"/>
<evidence type="ECO:0000250" key="2">
    <source>
        <dbReference type="UniProtKB" id="P00157"/>
    </source>
</evidence>
<evidence type="ECO:0000255" key="3">
    <source>
        <dbReference type="PROSITE-ProRule" id="PRU00967"/>
    </source>
</evidence>
<evidence type="ECO:0000255" key="4">
    <source>
        <dbReference type="PROSITE-ProRule" id="PRU00968"/>
    </source>
</evidence>
<accession>Q4VUV8</accession>
<feature type="chain" id="PRO_0000254869" description="Cytochrome b">
    <location>
        <begin position="1"/>
        <end position="379"/>
    </location>
</feature>
<feature type="transmembrane region" description="Helical" evidence="2">
    <location>
        <begin position="33"/>
        <end position="53"/>
    </location>
</feature>
<feature type="transmembrane region" description="Helical" evidence="2">
    <location>
        <begin position="77"/>
        <end position="98"/>
    </location>
</feature>
<feature type="transmembrane region" description="Helical" evidence="2">
    <location>
        <begin position="113"/>
        <end position="133"/>
    </location>
</feature>
<feature type="transmembrane region" description="Helical" evidence="2">
    <location>
        <begin position="178"/>
        <end position="198"/>
    </location>
</feature>
<feature type="transmembrane region" description="Helical" evidence="2">
    <location>
        <begin position="226"/>
        <end position="246"/>
    </location>
</feature>
<feature type="transmembrane region" description="Helical" evidence="2">
    <location>
        <begin position="288"/>
        <end position="308"/>
    </location>
</feature>
<feature type="transmembrane region" description="Helical" evidence="2">
    <location>
        <begin position="320"/>
        <end position="340"/>
    </location>
</feature>
<feature type="transmembrane region" description="Helical" evidence="2">
    <location>
        <begin position="347"/>
        <end position="367"/>
    </location>
</feature>
<feature type="binding site" description="axial binding residue" evidence="2">
    <location>
        <position position="83"/>
    </location>
    <ligand>
        <name>heme b</name>
        <dbReference type="ChEBI" id="CHEBI:60344"/>
        <label>b562</label>
    </ligand>
    <ligandPart>
        <name>Fe</name>
        <dbReference type="ChEBI" id="CHEBI:18248"/>
    </ligandPart>
</feature>
<feature type="binding site" description="axial binding residue" evidence="2">
    <location>
        <position position="97"/>
    </location>
    <ligand>
        <name>heme b</name>
        <dbReference type="ChEBI" id="CHEBI:60344"/>
        <label>b566</label>
    </ligand>
    <ligandPart>
        <name>Fe</name>
        <dbReference type="ChEBI" id="CHEBI:18248"/>
    </ligandPart>
</feature>
<feature type="binding site" description="axial binding residue" evidence="2">
    <location>
        <position position="182"/>
    </location>
    <ligand>
        <name>heme b</name>
        <dbReference type="ChEBI" id="CHEBI:60344"/>
        <label>b562</label>
    </ligand>
    <ligandPart>
        <name>Fe</name>
        <dbReference type="ChEBI" id="CHEBI:18248"/>
    </ligandPart>
</feature>
<feature type="binding site" description="axial binding residue" evidence="2">
    <location>
        <position position="196"/>
    </location>
    <ligand>
        <name>heme b</name>
        <dbReference type="ChEBI" id="CHEBI:60344"/>
        <label>b566</label>
    </ligand>
    <ligandPart>
        <name>Fe</name>
        <dbReference type="ChEBI" id="CHEBI:18248"/>
    </ligandPart>
</feature>
<feature type="binding site" evidence="2">
    <location>
        <position position="201"/>
    </location>
    <ligand>
        <name>a ubiquinone</name>
        <dbReference type="ChEBI" id="CHEBI:16389"/>
    </ligand>
</feature>
<proteinExistence type="inferred from homology"/>
<sequence>MTNIRKTHPILKIVNDSFIDLPAPSSLTSWWNFGSLLGICLGIQIMTGLFLAMHYTSDSATAFNSVTHICRDVNYGWILRYAHANGASMFFICLYLHVGRGLYYGSYTYSETWNVGVLLLFAVMATAFMGYVLPWGQMSFWGATVITNLLSAIPYIGTDLVQWIWGGFSVDKATLTRFFAFHFVLPFIISAMVMVHLLFLHETGSNNPTGIPSDLDMIPFHPYYSIKDILGFLLMLTALSVLTLFSPDLLGDPDNYMPANPLNTPPHIKPEWYFLFAYAILRSIPNKLGGVLALVLSILVLAIIPLLHTSKQRSLMFRPISRFLFWLLVANLLTLTWIGGQPVEYPYIAIGQAASILYFSIILILMPLAGILENYMLKW</sequence>
<keyword id="KW-0249">Electron transport</keyword>
<keyword id="KW-0349">Heme</keyword>
<keyword id="KW-0408">Iron</keyword>
<keyword id="KW-0472">Membrane</keyword>
<keyword id="KW-0479">Metal-binding</keyword>
<keyword id="KW-0496">Mitochondrion</keyword>
<keyword id="KW-0999">Mitochondrion inner membrane</keyword>
<keyword id="KW-0679">Respiratory chain</keyword>
<keyword id="KW-0812">Transmembrane</keyword>
<keyword id="KW-1133">Transmembrane helix</keyword>
<keyword id="KW-0813">Transport</keyword>
<keyword id="KW-0830">Ubiquinone</keyword>
<name>CYB_THYTR</name>
<gene>
    <name type="primary">MT-CYB</name>
    <name type="synonym">COB</name>
    <name type="synonym">CYTB</name>
    <name type="synonym">MTCYB</name>
</gene>
<organism>
    <name type="scientific">Thyroptera tricolor</name>
    <name type="common">Spix's disk-winged bat</name>
    <dbReference type="NCBI Taxonomy" id="124759"/>
    <lineage>
        <taxon>Eukaryota</taxon>
        <taxon>Metazoa</taxon>
        <taxon>Chordata</taxon>
        <taxon>Craniata</taxon>
        <taxon>Vertebrata</taxon>
        <taxon>Euteleostomi</taxon>
        <taxon>Mammalia</taxon>
        <taxon>Eutheria</taxon>
        <taxon>Laurasiatheria</taxon>
        <taxon>Chiroptera</taxon>
        <taxon>Yangochiroptera</taxon>
        <taxon>Thyropteridae</taxon>
        <taxon>Thyroptera</taxon>
    </lineage>
</organism>
<comment type="function">
    <text evidence="2">Component of the ubiquinol-cytochrome c reductase complex (complex III or cytochrome b-c1 complex) that is part of the mitochondrial respiratory chain. The b-c1 complex mediates electron transfer from ubiquinol to cytochrome c. Contributes to the generation of a proton gradient across the mitochondrial membrane that is then used for ATP synthesis.</text>
</comment>
<comment type="cofactor">
    <cofactor evidence="2">
        <name>heme b</name>
        <dbReference type="ChEBI" id="CHEBI:60344"/>
    </cofactor>
    <text evidence="2">Binds 2 heme b groups non-covalently.</text>
</comment>
<comment type="subunit">
    <text evidence="2">The cytochrome bc1 complex contains 11 subunits: 3 respiratory subunits (MT-CYB, CYC1 and UQCRFS1), 2 core proteins (UQCRC1 and UQCRC2) and 6 low-molecular weight proteins (UQCRH/QCR6, UQCRB/QCR7, UQCRQ/QCR8, UQCR10/QCR9, UQCR11/QCR10 and a cleavage product of UQCRFS1). This cytochrome bc1 complex then forms a dimer.</text>
</comment>
<comment type="subcellular location">
    <subcellularLocation>
        <location evidence="2">Mitochondrion inner membrane</location>
        <topology evidence="2">Multi-pass membrane protein</topology>
    </subcellularLocation>
</comment>
<comment type="miscellaneous">
    <text evidence="1">Heme 1 (or BL or b562) is low-potential and absorbs at about 562 nm, and heme 2 (or BH or b566) is high-potential and absorbs at about 566 nm.</text>
</comment>
<comment type="similarity">
    <text evidence="3 4">Belongs to the cytochrome b family.</text>
</comment>
<comment type="caution">
    <text evidence="2">The full-length protein contains only eight transmembrane helices, not nine as predicted by bioinformatics tools.</text>
</comment>
<protein>
    <recommendedName>
        <fullName>Cytochrome b</fullName>
    </recommendedName>
    <alternativeName>
        <fullName>Complex III subunit 3</fullName>
    </alternativeName>
    <alternativeName>
        <fullName>Complex III subunit III</fullName>
    </alternativeName>
    <alternativeName>
        <fullName>Cytochrome b-c1 complex subunit 3</fullName>
    </alternativeName>
    <alternativeName>
        <fullName>Ubiquinol-cytochrome-c reductase complex cytochrome b subunit</fullName>
    </alternativeName>
</protein>
<reference key="1">
    <citation type="journal article" date="2005" name="Mol. Phylogenet. Evol.">
        <title>Molecular phylogeny of funnel-eared bats (Chiroptera: Natalidae), with notes on biogeography and conservation.</title>
        <authorList>
            <person name="Davalos L.M."/>
        </authorList>
    </citation>
    <scope>NUCLEOTIDE SEQUENCE [GENOMIC DNA]</scope>
</reference>
<dbReference type="EMBL" id="AY621005">
    <property type="protein sequence ID" value="AAU04728.1"/>
    <property type="molecule type" value="Genomic_DNA"/>
</dbReference>
<dbReference type="SMR" id="Q4VUV8"/>
<dbReference type="GO" id="GO:0005743">
    <property type="term" value="C:mitochondrial inner membrane"/>
    <property type="evidence" value="ECO:0007669"/>
    <property type="project" value="UniProtKB-SubCell"/>
</dbReference>
<dbReference type="GO" id="GO:0045275">
    <property type="term" value="C:respiratory chain complex III"/>
    <property type="evidence" value="ECO:0007669"/>
    <property type="project" value="InterPro"/>
</dbReference>
<dbReference type="GO" id="GO:0046872">
    <property type="term" value="F:metal ion binding"/>
    <property type="evidence" value="ECO:0007669"/>
    <property type="project" value="UniProtKB-KW"/>
</dbReference>
<dbReference type="GO" id="GO:0008121">
    <property type="term" value="F:ubiquinol-cytochrome-c reductase activity"/>
    <property type="evidence" value="ECO:0007669"/>
    <property type="project" value="InterPro"/>
</dbReference>
<dbReference type="GO" id="GO:0006122">
    <property type="term" value="P:mitochondrial electron transport, ubiquinol to cytochrome c"/>
    <property type="evidence" value="ECO:0007669"/>
    <property type="project" value="TreeGrafter"/>
</dbReference>
<dbReference type="CDD" id="cd00290">
    <property type="entry name" value="cytochrome_b_C"/>
    <property type="match status" value="1"/>
</dbReference>
<dbReference type="CDD" id="cd00284">
    <property type="entry name" value="Cytochrome_b_N"/>
    <property type="match status" value="1"/>
</dbReference>
<dbReference type="FunFam" id="1.20.810.10:FF:000002">
    <property type="entry name" value="Cytochrome b"/>
    <property type="match status" value="1"/>
</dbReference>
<dbReference type="Gene3D" id="1.20.810.10">
    <property type="entry name" value="Cytochrome Bc1 Complex, Chain C"/>
    <property type="match status" value="1"/>
</dbReference>
<dbReference type="InterPro" id="IPR005798">
    <property type="entry name" value="Cyt_b/b6_C"/>
</dbReference>
<dbReference type="InterPro" id="IPR036150">
    <property type="entry name" value="Cyt_b/b6_C_sf"/>
</dbReference>
<dbReference type="InterPro" id="IPR005797">
    <property type="entry name" value="Cyt_b/b6_N"/>
</dbReference>
<dbReference type="InterPro" id="IPR027387">
    <property type="entry name" value="Cytb/b6-like_sf"/>
</dbReference>
<dbReference type="InterPro" id="IPR030689">
    <property type="entry name" value="Cytochrome_b"/>
</dbReference>
<dbReference type="InterPro" id="IPR048260">
    <property type="entry name" value="Cytochrome_b_C_euk/bac"/>
</dbReference>
<dbReference type="InterPro" id="IPR048259">
    <property type="entry name" value="Cytochrome_b_N_euk/bac"/>
</dbReference>
<dbReference type="InterPro" id="IPR016174">
    <property type="entry name" value="Di-haem_cyt_TM"/>
</dbReference>
<dbReference type="PANTHER" id="PTHR19271">
    <property type="entry name" value="CYTOCHROME B"/>
    <property type="match status" value="1"/>
</dbReference>
<dbReference type="PANTHER" id="PTHR19271:SF16">
    <property type="entry name" value="CYTOCHROME B"/>
    <property type="match status" value="1"/>
</dbReference>
<dbReference type="Pfam" id="PF00032">
    <property type="entry name" value="Cytochrom_B_C"/>
    <property type="match status" value="1"/>
</dbReference>
<dbReference type="Pfam" id="PF00033">
    <property type="entry name" value="Cytochrome_B"/>
    <property type="match status" value="1"/>
</dbReference>
<dbReference type="PIRSF" id="PIRSF038885">
    <property type="entry name" value="COB"/>
    <property type="match status" value="1"/>
</dbReference>
<dbReference type="SUPFAM" id="SSF81648">
    <property type="entry name" value="a domain/subunit of cytochrome bc1 complex (Ubiquinol-cytochrome c reductase)"/>
    <property type="match status" value="1"/>
</dbReference>
<dbReference type="SUPFAM" id="SSF81342">
    <property type="entry name" value="Transmembrane di-heme cytochromes"/>
    <property type="match status" value="1"/>
</dbReference>
<dbReference type="PROSITE" id="PS51003">
    <property type="entry name" value="CYTB_CTER"/>
    <property type="match status" value="1"/>
</dbReference>
<dbReference type="PROSITE" id="PS51002">
    <property type="entry name" value="CYTB_NTER"/>
    <property type="match status" value="1"/>
</dbReference>
<geneLocation type="mitochondrion"/>